<comment type="function">
    <text evidence="1">Hydrolyzes diadenosine 5',5'''-P1,P4-tetraphosphate to yield ADP.</text>
</comment>
<comment type="catalytic activity">
    <reaction evidence="1">
        <text>P(1),P(4)-bis(5'-adenosyl) tetraphosphate + H2O = 2 ADP + 2 H(+)</text>
        <dbReference type="Rhea" id="RHEA:24252"/>
        <dbReference type="ChEBI" id="CHEBI:15377"/>
        <dbReference type="ChEBI" id="CHEBI:15378"/>
        <dbReference type="ChEBI" id="CHEBI:58141"/>
        <dbReference type="ChEBI" id="CHEBI:456216"/>
        <dbReference type="EC" id="3.6.1.41"/>
    </reaction>
</comment>
<comment type="similarity">
    <text evidence="1">Belongs to the Ap4A hydrolase family.</text>
</comment>
<dbReference type="EC" id="3.6.1.41" evidence="1"/>
<dbReference type="EMBL" id="CP000720">
    <property type="protein sequence ID" value="ABS48828.1"/>
    <property type="molecule type" value="Genomic_DNA"/>
</dbReference>
<dbReference type="RefSeq" id="WP_012105684.1">
    <property type="nucleotide sequence ID" value="NC_009708.1"/>
</dbReference>
<dbReference type="SMR" id="A7FMC3"/>
<dbReference type="KEGG" id="ypi:YpsIP31758_3446"/>
<dbReference type="HOGENOM" id="CLU_056184_2_0_6"/>
<dbReference type="Proteomes" id="UP000002412">
    <property type="component" value="Chromosome"/>
</dbReference>
<dbReference type="GO" id="GO:0008803">
    <property type="term" value="F:bis(5'-nucleosyl)-tetraphosphatase (symmetrical) activity"/>
    <property type="evidence" value="ECO:0007669"/>
    <property type="project" value="UniProtKB-UniRule"/>
</dbReference>
<dbReference type="CDD" id="cd07422">
    <property type="entry name" value="MPP_ApaH"/>
    <property type="match status" value="1"/>
</dbReference>
<dbReference type="FunFam" id="3.60.21.10:FF:000013">
    <property type="entry name" value="Bis(5'-nucleosyl)-tetraphosphatase, symmetrical"/>
    <property type="match status" value="1"/>
</dbReference>
<dbReference type="Gene3D" id="3.60.21.10">
    <property type="match status" value="1"/>
</dbReference>
<dbReference type="HAMAP" id="MF_00199">
    <property type="entry name" value="ApaH"/>
    <property type="match status" value="1"/>
</dbReference>
<dbReference type="InterPro" id="IPR004617">
    <property type="entry name" value="ApaH"/>
</dbReference>
<dbReference type="InterPro" id="IPR004843">
    <property type="entry name" value="Calcineurin-like_PHP_ApaH"/>
</dbReference>
<dbReference type="InterPro" id="IPR029052">
    <property type="entry name" value="Metallo-depent_PP-like"/>
</dbReference>
<dbReference type="NCBIfam" id="TIGR00668">
    <property type="entry name" value="apaH"/>
    <property type="match status" value="1"/>
</dbReference>
<dbReference type="NCBIfam" id="NF001204">
    <property type="entry name" value="PRK00166.1"/>
    <property type="match status" value="1"/>
</dbReference>
<dbReference type="PANTHER" id="PTHR40942">
    <property type="match status" value="1"/>
</dbReference>
<dbReference type="PANTHER" id="PTHR40942:SF4">
    <property type="entry name" value="CYTOCHROME C5"/>
    <property type="match status" value="1"/>
</dbReference>
<dbReference type="Pfam" id="PF00149">
    <property type="entry name" value="Metallophos"/>
    <property type="match status" value="1"/>
</dbReference>
<dbReference type="PIRSF" id="PIRSF000903">
    <property type="entry name" value="B5n-ttraPtase_sm"/>
    <property type="match status" value="1"/>
</dbReference>
<dbReference type="SUPFAM" id="SSF56300">
    <property type="entry name" value="Metallo-dependent phosphatases"/>
    <property type="match status" value="1"/>
</dbReference>
<sequence>MSTYLIGDIHGCLDELLALLAQVNFDPQQDTLWLTGDLVARGPASLDVLRYVRSLGPAVRMVLGNHDLHLLAVYAGISRNKPKDRITPLLDAPDADELINWLRRQPVLQVDDQLKLIMAHAGITPQWDIETAKMCAREVEAVLSSDSYPLFLDAMYGDMPNNWSPELTGLARLRFSTNALTRMRFCFPNGQLDMICKDTPENAPAPLKPWFDLPRLVDPEYSIIFGHWASLEGKGVPEGIYGLDTGCCWGGDLTLLRWEDKRYFTQRAFKAEAEINNNNGFAAGKEVQH</sequence>
<accession>A7FMC3</accession>
<name>APAH_YERP3</name>
<feature type="chain" id="PRO_1000058560" description="Bis(5'-nucleosyl)-tetraphosphatase, symmetrical">
    <location>
        <begin position="1"/>
        <end position="289"/>
    </location>
</feature>
<organism>
    <name type="scientific">Yersinia pseudotuberculosis serotype O:1b (strain IP 31758)</name>
    <dbReference type="NCBI Taxonomy" id="349747"/>
    <lineage>
        <taxon>Bacteria</taxon>
        <taxon>Pseudomonadati</taxon>
        <taxon>Pseudomonadota</taxon>
        <taxon>Gammaproteobacteria</taxon>
        <taxon>Enterobacterales</taxon>
        <taxon>Yersiniaceae</taxon>
        <taxon>Yersinia</taxon>
    </lineage>
</organism>
<protein>
    <recommendedName>
        <fullName evidence="1">Bis(5'-nucleosyl)-tetraphosphatase, symmetrical</fullName>
        <ecNumber evidence="1">3.6.1.41</ecNumber>
    </recommendedName>
    <alternativeName>
        <fullName evidence="1">Ap4A hydrolase</fullName>
    </alternativeName>
    <alternativeName>
        <fullName evidence="1">Diadenosine 5',5'''-P1,P4-tetraphosphate pyrophosphohydrolase</fullName>
    </alternativeName>
    <alternativeName>
        <fullName evidence="1">Diadenosine tetraphosphatase</fullName>
    </alternativeName>
</protein>
<reference key="1">
    <citation type="journal article" date="2007" name="PLoS Genet.">
        <title>The complete genome sequence of Yersinia pseudotuberculosis IP31758, the causative agent of Far East scarlet-like fever.</title>
        <authorList>
            <person name="Eppinger M."/>
            <person name="Rosovitz M.J."/>
            <person name="Fricke W.F."/>
            <person name="Rasko D.A."/>
            <person name="Kokorina G."/>
            <person name="Fayolle C."/>
            <person name="Lindler L.E."/>
            <person name="Carniel E."/>
            <person name="Ravel J."/>
        </authorList>
    </citation>
    <scope>NUCLEOTIDE SEQUENCE [LARGE SCALE GENOMIC DNA]</scope>
    <source>
        <strain>IP 31758</strain>
    </source>
</reference>
<gene>
    <name evidence="1" type="primary">apaH</name>
    <name type="ordered locus">YpsIP31758_3446</name>
</gene>
<proteinExistence type="inferred from homology"/>
<evidence type="ECO:0000255" key="1">
    <source>
        <dbReference type="HAMAP-Rule" id="MF_00199"/>
    </source>
</evidence>
<keyword id="KW-0378">Hydrolase</keyword>